<proteinExistence type="inferred from homology"/>
<dbReference type="EC" id="7.-.-.-" evidence="1"/>
<dbReference type="EMBL" id="AE014075">
    <property type="protein sequence ID" value="AAN80484.1"/>
    <property type="molecule type" value="Genomic_DNA"/>
</dbReference>
<dbReference type="RefSeq" id="WP_001289647.1">
    <property type="nucleotide sequence ID" value="NZ_CP051263.1"/>
</dbReference>
<dbReference type="SMR" id="Q8FH92"/>
<dbReference type="STRING" id="199310.c2024"/>
<dbReference type="KEGG" id="ecc:c2024"/>
<dbReference type="eggNOG" id="COG4660">
    <property type="taxonomic scope" value="Bacteria"/>
</dbReference>
<dbReference type="HOGENOM" id="CLU_046659_1_0_6"/>
<dbReference type="BioCyc" id="ECOL199310:C2024-MONOMER"/>
<dbReference type="Proteomes" id="UP000001410">
    <property type="component" value="Chromosome"/>
</dbReference>
<dbReference type="GO" id="GO:0005886">
    <property type="term" value="C:plasma membrane"/>
    <property type="evidence" value="ECO:0007669"/>
    <property type="project" value="UniProtKB-SubCell"/>
</dbReference>
<dbReference type="GO" id="GO:0022900">
    <property type="term" value="P:electron transport chain"/>
    <property type="evidence" value="ECO:0007669"/>
    <property type="project" value="UniProtKB-UniRule"/>
</dbReference>
<dbReference type="HAMAP" id="MF_00478">
    <property type="entry name" value="RsxE_RnfE"/>
    <property type="match status" value="1"/>
</dbReference>
<dbReference type="InterPro" id="IPR003667">
    <property type="entry name" value="NqrDE/RnfAE"/>
</dbReference>
<dbReference type="InterPro" id="IPR010968">
    <property type="entry name" value="RnfE"/>
</dbReference>
<dbReference type="NCBIfam" id="NF009070">
    <property type="entry name" value="PRK12405.1"/>
    <property type="match status" value="1"/>
</dbReference>
<dbReference type="NCBIfam" id="TIGR01948">
    <property type="entry name" value="rnfE"/>
    <property type="match status" value="1"/>
</dbReference>
<dbReference type="PANTHER" id="PTHR30586">
    <property type="entry name" value="ELECTRON TRANSPORT COMPLEX PROTEIN RNFE"/>
    <property type="match status" value="1"/>
</dbReference>
<dbReference type="PANTHER" id="PTHR30586:SF0">
    <property type="entry name" value="ION-TRANSLOCATING OXIDOREDUCTASE COMPLEX SUBUNIT E"/>
    <property type="match status" value="1"/>
</dbReference>
<dbReference type="Pfam" id="PF02508">
    <property type="entry name" value="Rnf-Nqr"/>
    <property type="match status" value="1"/>
</dbReference>
<dbReference type="PIRSF" id="PIRSF006102">
    <property type="entry name" value="NQR_DE"/>
    <property type="match status" value="1"/>
</dbReference>
<keyword id="KW-0997">Cell inner membrane</keyword>
<keyword id="KW-1003">Cell membrane</keyword>
<keyword id="KW-0249">Electron transport</keyword>
<keyword id="KW-0472">Membrane</keyword>
<keyword id="KW-1185">Reference proteome</keyword>
<keyword id="KW-1278">Translocase</keyword>
<keyword id="KW-0812">Transmembrane</keyword>
<keyword id="KW-1133">Transmembrane helix</keyword>
<keyword id="KW-0813">Transport</keyword>
<protein>
    <recommendedName>
        <fullName evidence="1">Ion-translocating oxidoreductase complex subunit E</fullName>
        <ecNumber evidence="1">7.-.-.-</ecNumber>
    </recommendedName>
    <alternativeName>
        <fullName evidence="1">Rsx electron transport complex subunit E</fullName>
    </alternativeName>
</protein>
<accession>Q8FH92</accession>
<evidence type="ECO:0000255" key="1">
    <source>
        <dbReference type="HAMAP-Rule" id="MF_00478"/>
    </source>
</evidence>
<reference key="1">
    <citation type="journal article" date="2002" name="Proc. Natl. Acad. Sci. U.S.A.">
        <title>Extensive mosaic structure revealed by the complete genome sequence of uropathogenic Escherichia coli.</title>
        <authorList>
            <person name="Welch R.A."/>
            <person name="Burland V."/>
            <person name="Plunkett G. III"/>
            <person name="Redford P."/>
            <person name="Roesch P."/>
            <person name="Rasko D."/>
            <person name="Buckles E.L."/>
            <person name="Liou S.-R."/>
            <person name="Boutin A."/>
            <person name="Hackett J."/>
            <person name="Stroud D."/>
            <person name="Mayhew G.F."/>
            <person name="Rose D.J."/>
            <person name="Zhou S."/>
            <person name="Schwartz D.C."/>
            <person name="Perna N.T."/>
            <person name="Mobley H.L.T."/>
            <person name="Donnenberg M.S."/>
            <person name="Blattner F.R."/>
        </authorList>
    </citation>
    <scope>NUCLEOTIDE SEQUENCE [LARGE SCALE GENOMIC DNA]</scope>
    <source>
        <strain>CFT073 / ATCC 700928 / UPEC</strain>
    </source>
</reference>
<organism>
    <name type="scientific">Escherichia coli O6:H1 (strain CFT073 / ATCC 700928 / UPEC)</name>
    <dbReference type="NCBI Taxonomy" id="199310"/>
    <lineage>
        <taxon>Bacteria</taxon>
        <taxon>Pseudomonadati</taxon>
        <taxon>Pseudomonadota</taxon>
        <taxon>Gammaproteobacteria</taxon>
        <taxon>Enterobacterales</taxon>
        <taxon>Enterobacteriaceae</taxon>
        <taxon>Escherichia</taxon>
    </lineage>
</organism>
<feature type="chain" id="PRO_0000214271" description="Ion-translocating oxidoreductase complex subunit E">
    <location>
        <begin position="1"/>
        <end position="231"/>
    </location>
</feature>
<feature type="transmembrane region" description="Helical" evidence="1">
    <location>
        <begin position="18"/>
        <end position="38"/>
    </location>
</feature>
<feature type="transmembrane region" description="Helical" evidence="1">
    <location>
        <begin position="39"/>
        <end position="59"/>
    </location>
</feature>
<feature type="transmembrane region" description="Helical" evidence="1">
    <location>
        <begin position="63"/>
        <end position="83"/>
    </location>
</feature>
<feature type="transmembrane region" description="Helical" evidence="1">
    <location>
        <begin position="86"/>
        <end position="106"/>
    </location>
</feature>
<feature type="transmembrane region" description="Helical" evidence="1">
    <location>
        <begin position="125"/>
        <end position="145"/>
    </location>
</feature>
<feature type="transmembrane region" description="Helical" evidence="1">
    <location>
        <begin position="182"/>
        <end position="202"/>
    </location>
</feature>
<sequence length="231" mass="24489">MSEIKDVIVQGLWKNNSALVQLLGLCPLLAVTSTATNALGLGLATTLVLTLTNLTISTLRHWTPAEIRIPIYVMIIASVVSAVQMLINAYAFGLYQSLGIFIPLIVTNCIVVGRAEAFAAKKGPALSALDGFSIGMGATCAMFVLGSLREIIGNGTLFDGADALLGSWAKVLRVEIFHTDSPFLLAMLPPGAFIGLGLMLAGKYLIDEKMKKRRTEAVAERALPNGETGNV</sequence>
<gene>
    <name evidence="1" type="primary">rsxE</name>
    <name type="ordered locus">c2024</name>
</gene>
<name>RSXE_ECOL6</name>
<comment type="function">
    <text evidence="1">Part of a membrane-bound complex that couples electron transfer with translocation of ions across the membrane. Required to maintain the reduced state of SoxR.</text>
</comment>
<comment type="subunit">
    <text evidence="1">The complex is composed of six subunits: RsxA, RsxB, RsxC, RsxD, RsxE and RsxG.</text>
</comment>
<comment type="subcellular location">
    <subcellularLocation>
        <location evidence="1">Cell inner membrane</location>
        <topology evidence="1">Multi-pass membrane protein</topology>
    </subcellularLocation>
</comment>
<comment type="similarity">
    <text evidence="1">Belongs to the NqrDE/RnfAE family.</text>
</comment>